<organismHost>
    <name type="scientific">Ornithodoros</name>
    <name type="common">relapsing fever ticks</name>
    <dbReference type="NCBI Taxonomy" id="6937"/>
</organismHost>
<organismHost>
    <name type="scientific">Sus scrofa</name>
    <name type="common">Pig</name>
    <dbReference type="NCBI Taxonomy" id="9823"/>
</organismHost>
<protein>
    <recommendedName>
        <fullName>Uncharacterized protein pNG1</fullName>
    </recommendedName>
</protein>
<gene>
    <name evidence="2" type="primary">pNG1</name>
</gene>
<dbReference type="EMBL" id="U18466">
    <property type="status" value="NOT_ANNOTATED_CDS"/>
    <property type="molecule type" value="Genomic_DNA"/>
</dbReference>
<dbReference type="Proteomes" id="UP000000624">
    <property type="component" value="Segment"/>
</dbReference>
<organism>
    <name type="scientific">African swine fever virus (strain Badajoz 1971 Vero-adapted)</name>
    <name type="common">Ba71V</name>
    <name type="synonym">ASFV</name>
    <dbReference type="NCBI Taxonomy" id="10498"/>
    <lineage>
        <taxon>Viruses</taxon>
        <taxon>Varidnaviria</taxon>
        <taxon>Bamfordvirae</taxon>
        <taxon>Nucleocytoviricota</taxon>
        <taxon>Pokkesviricetes</taxon>
        <taxon>Asfuvirales</taxon>
        <taxon>Asfarviridae</taxon>
        <taxon>Asfivirus</taxon>
        <taxon>African swine fever virus</taxon>
    </lineage>
</organism>
<reference key="1">
    <citation type="journal article" date="1995" name="Virology">
        <title>Analysis of the complete nucleotide sequence of African swine fever virus.</title>
        <authorList>
            <person name="Yanez R.J."/>
            <person name="Rodriguez J.M."/>
            <person name="Nogal M.L."/>
            <person name="Yuste L."/>
            <person name="Enriquez C."/>
            <person name="Rodriguez J.F."/>
            <person name="Vinuela E."/>
        </authorList>
    </citation>
    <scope>NUCLEOTIDE SEQUENCE [LARGE SCALE GENOMIC DNA]</scope>
</reference>
<reference key="2">
    <citation type="journal article" date="2020" name="J. Virol.">
        <title>The African Swine Fever Virus Transcriptome.</title>
        <authorList>
            <person name="Cackett G."/>
            <person name="Matelska D."/>
            <person name="Sykora M."/>
            <person name="Portugal R."/>
            <person name="Malecki M."/>
            <person name="Baehler J."/>
            <person name="Dixon L."/>
            <person name="Werner F."/>
        </authorList>
    </citation>
    <scope>IDENTIFICATION</scope>
    <scope>INDUCTION</scope>
</reference>
<evidence type="ECO:0000269" key="1">
    <source>
    </source>
</evidence>
<evidence type="ECO:0000303" key="2">
    <source>
    </source>
</evidence>
<feature type="chain" id="PRO_0000454434" description="Uncharacterized protein pNG1">
    <location>
        <begin position="1"/>
        <end position="25"/>
    </location>
</feature>
<accession>P0DV14</accession>
<proteinExistence type="evidence at transcript level"/>
<sequence length="25" mass="2652">MMFDSLLSTITGGGVSHSFSIAMVY</sequence>
<keyword id="KW-0244">Early protein</keyword>
<keyword id="KW-1185">Reference proteome</keyword>
<name>PNG1_ASFB7</name>
<comment type="induction">
    <text evidence="1">Expressed in the early phase of the viral replicative cycle.</text>
</comment>